<keyword id="KW-0456">Lyase</keyword>
<keyword id="KW-0501">Molybdenum cofactor biosynthesis</keyword>
<keyword id="KW-1185">Reference proteome</keyword>
<protein>
    <recommendedName>
        <fullName evidence="1">Cyclic pyranopterin monophosphate synthase</fullName>
        <ecNumber evidence="1">4.6.1.17</ecNumber>
    </recommendedName>
    <alternativeName>
        <fullName evidence="1">Molybdenum cofactor biosynthesis protein C</fullName>
    </alternativeName>
</protein>
<sequence length="166" mass="18168">MEGAMTEPGKEMTHLDARGRLRMVDVSGKERTAREARAEATVEVSPETLTRISEGTIAKGNVYEAARIAGIMAAKRTWELIPLCHPLQVTGVEIEFSADPARNEIRILSRVKTLDRTGVEMEALVAAAHAGLTIYDMCKAVDRGIVIRDIRLLYKSGGKSGTFERA</sequence>
<reference key="1">
    <citation type="submission" date="2006-10" db="EMBL/GenBank/DDBJ databases">
        <title>Complete sequence of Syntrophobacter fumaroxidans MPOB.</title>
        <authorList>
            <consortium name="US DOE Joint Genome Institute"/>
            <person name="Copeland A."/>
            <person name="Lucas S."/>
            <person name="Lapidus A."/>
            <person name="Barry K."/>
            <person name="Detter J.C."/>
            <person name="Glavina del Rio T."/>
            <person name="Hammon N."/>
            <person name="Israni S."/>
            <person name="Pitluck S."/>
            <person name="Goltsman E.G."/>
            <person name="Martinez M."/>
            <person name="Schmutz J."/>
            <person name="Larimer F."/>
            <person name="Land M."/>
            <person name="Hauser L."/>
            <person name="Kyrpides N."/>
            <person name="Kim E."/>
            <person name="Boone D.R."/>
            <person name="Brockman F."/>
            <person name="Culley D."/>
            <person name="Ferry J."/>
            <person name="Gunsalus R."/>
            <person name="McInerney M.J."/>
            <person name="Morrison M."/>
            <person name="Plugge C."/>
            <person name="Rohlin L."/>
            <person name="Scholten J."/>
            <person name="Sieber J."/>
            <person name="Stams A.J.M."/>
            <person name="Worm P."/>
            <person name="Henstra A.M."/>
            <person name="Richardson P."/>
        </authorList>
    </citation>
    <scope>NUCLEOTIDE SEQUENCE [LARGE SCALE GENOMIC DNA]</scope>
    <source>
        <strain>DSM 10017 / MPOB</strain>
    </source>
</reference>
<proteinExistence type="inferred from homology"/>
<name>MOAC_SYNFM</name>
<organism>
    <name type="scientific">Syntrophobacter fumaroxidans (strain DSM 10017 / MPOB)</name>
    <dbReference type="NCBI Taxonomy" id="335543"/>
    <lineage>
        <taxon>Bacteria</taxon>
        <taxon>Pseudomonadati</taxon>
        <taxon>Thermodesulfobacteriota</taxon>
        <taxon>Syntrophobacteria</taxon>
        <taxon>Syntrophobacterales</taxon>
        <taxon>Syntrophobacteraceae</taxon>
        <taxon>Syntrophobacter</taxon>
    </lineage>
</organism>
<comment type="function">
    <text evidence="1">Catalyzes the conversion of (8S)-3',8-cyclo-7,8-dihydroguanosine 5'-triphosphate to cyclic pyranopterin monophosphate (cPMP).</text>
</comment>
<comment type="catalytic activity">
    <reaction evidence="1">
        <text>(8S)-3',8-cyclo-7,8-dihydroguanosine 5'-triphosphate = cyclic pyranopterin phosphate + diphosphate</text>
        <dbReference type="Rhea" id="RHEA:49580"/>
        <dbReference type="ChEBI" id="CHEBI:33019"/>
        <dbReference type="ChEBI" id="CHEBI:59648"/>
        <dbReference type="ChEBI" id="CHEBI:131766"/>
        <dbReference type="EC" id="4.6.1.17"/>
    </reaction>
</comment>
<comment type="pathway">
    <text evidence="1">Cofactor biosynthesis; molybdopterin biosynthesis.</text>
</comment>
<comment type="subunit">
    <text evidence="1">Homohexamer; trimer of dimers.</text>
</comment>
<comment type="similarity">
    <text evidence="1">Belongs to the MoaC family.</text>
</comment>
<gene>
    <name evidence="1" type="primary">moaC</name>
    <name type="ordered locus">Sfum_2612</name>
</gene>
<dbReference type="EC" id="4.6.1.17" evidence="1"/>
<dbReference type="EMBL" id="CP000478">
    <property type="protein sequence ID" value="ABK18290.1"/>
    <property type="molecule type" value="Genomic_DNA"/>
</dbReference>
<dbReference type="RefSeq" id="WP_011699457.1">
    <property type="nucleotide sequence ID" value="NC_008554.1"/>
</dbReference>
<dbReference type="SMR" id="A0LLI8"/>
<dbReference type="FunCoup" id="A0LLI8">
    <property type="interactions" value="354"/>
</dbReference>
<dbReference type="STRING" id="335543.Sfum_2612"/>
<dbReference type="KEGG" id="sfu:Sfum_2612"/>
<dbReference type="eggNOG" id="COG0315">
    <property type="taxonomic scope" value="Bacteria"/>
</dbReference>
<dbReference type="HOGENOM" id="CLU_074693_1_1_7"/>
<dbReference type="InParanoid" id="A0LLI8"/>
<dbReference type="OrthoDB" id="9794429at2"/>
<dbReference type="UniPathway" id="UPA00344"/>
<dbReference type="Proteomes" id="UP000001784">
    <property type="component" value="Chromosome"/>
</dbReference>
<dbReference type="GO" id="GO:0061799">
    <property type="term" value="F:cyclic pyranopterin monophosphate synthase activity"/>
    <property type="evidence" value="ECO:0007669"/>
    <property type="project" value="UniProtKB-UniRule"/>
</dbReference>
<dbReference type="GO" id="GO:0006777">
    <property type="term" value="P:Mo-molybdopterin cofactor biosynthetic process"/>
    <property type="evidence" value="ECO:0007669"/>
    <property type="project" value="UniProtKB-UniRule"/>
</dbReference>
<dbReference type="CDD" id="cd01420">
    <property type="entry name" value="MoaC_PE"/>
    <property type="match status" value="1"/>
</dbReference>
<dbReference type="Gene3D" id="3.30.70.640">
    <property type="entry name" value="Molybdopterin cofactor biosynthesis C (MoaC) domain"/>
    <property type="match status" value="1"/>
</dbReference>
<dbReference type="HAMAP" id="MF_01224_B">
    <property type="entry name" value="MoaC_B"/>
    <property type="match status" value="1"/>
</dbReference>
<dbReference type="InterPro" id="IPR023045">
    <property type="entry name" value="MoaC"/>
</dbReference>
<dbReference type="InterPro" id="IPR047594">
    <property type="entry name" value="MoaC_bact/euk"/>
</dbReference>
<dbReference type="InterPro" id="IPR036522">
    <property type="entry name" value="MoaC_sf"/>
</dbReference>
<dbReference type="InterPro" id="IPR050105">
    <property type="entry name" value="MoCo_biosynth_MoaA/MoaC"/>
</dbReference>
<dbReference type="InterPro" id="IPR002820">
    <property type="entry name" value="Mopterin_CF_biosynth-C_dom"/>
</dbReference>
<dbReference type="NCBIfam" id="TIGR00581">
    <property type="entry name" value="moaC"/>
    <property type="match status" value="1"/>
</dbReference>
<dbReference type="NCBIfam" id="NF006870">
    <property type="entry name" value="PRK09364.1"/>
    <property type="match status" value="1"/>
</dbReference>
<dbReference type="PANTHER" id="PTHR22960:SF29">
    <property type="entry name" value="CYCLIC PYRANOPTERIN MONOPHOSPHATE SYNTHASE"/>
    <property type="match status" value="1"/>
</dbReference>
<dbReference type="PANTHER" id="PTHR22960">
    <property type="entry name" value="MOLYBDOPTERIN COFACTOR SYNTHESIS PROTEIN A"/>
    <property type="match status" value="1"/>
</dbReference>
<dbReference type="Pfam" id="PF01967">
    <property type="entry name" value="MoaC"/>
    <property type="match status" value="1"/>
</dbReference>
<dbReference type="SUPFAM" id="SSF55040">
    <property type="entry name" value="Molybdenum cofactor biosynthesis protein C, MoaC"/>
    <property type="match status" value="1"/>
</dbReference>
<accession>A0LLI8</accession>
<evidence type="ECO:0000255" key="1">
    <source>
        <dbReference type="HAMAP-Rule" id="MF_01224"/>
    </source>
</evidence>
<feature type="chain" id="PRO_1000164902" description="Cyclic pyranopterin monophosphate synthase">
    <location>
        <begin position="1"/>
        <end position="166"/>
    </location>
</feature>
<feature type="active site" evidence="1">
    <location>
        <position position="136"/>
    </location>
</feature>
<feature type="binding site" evidence="1">
    <location>
        <begin position="83"/>
        <end position="85"/>
    </location>
    <ligand>
        <name>substrate</name>
    </ligand>
</feature>
<feature type="binding site" evidence="1">
    <location>
        <begin position="121"/>
        <end position="122"/>
    </location>
    <ligand>
        <name>substrate</name>
    </ligand>
</feature>